<gene>
    <name type="primary">CDC42</name>
    <name type="ORF">QflA-13723</name>
</gene>
<sequence>MQTIKCVVVGDGAVGKTCLLISYTTNKFPSEYVPTVFNNYAVTVMIGGEPYTLGLFDTAGQEDYDRLRPLSYPQTDVFLVCFSVVSPSSFENVKEKWVPEITHHCPKTPFLLVGTQIDLRDDPSTIEKLAKNKQKPITPETAEKLARDLKAVKYVECSALTQKGLKNVFDEAILAALEPPEPKKSRRCVLL</sequence>
<feature type="chain" id="PRO_0000270825" description="Cell division control protein 42 homolog">
    <location>
        <begin position="1"/>
        <end position="188"/>
    </location>
</feature>
<feature type="propeptide" id="PRO_0000270826" description="Removed in mature form" evidence="1">
    <location>
        <begin position="189"/>
        <end position="191"/>
    </location>
</feature>
<feature type="short sequence motif" description="Effector region" evidence="5">
    <location>
        <begin position="32"/>
        <end position="40"/>
    </location>
</feature>
<feature type="binding site" evidence="1">
    <location>
        <begin position="10"/>
        <end position="17"/>
    </location>
    <ligand>
        <name>GTP</name>
        <dbReference type="ChEBI" id="CHEBI:37565"/>
    </ligand>
</feature>
<feature type="binding site" evidence="1">
    <location>
        <begin position="57"/>
        <end position="61"/>
    </location>
    <ligand>
        <name>GTP</name>
        <dbReference type="ChEBI" id="CHEBI:37565"/>
    </ligand>
</feature>
<feature type="binding site" evidence="1">
    <location>
        <begin position="115"/>
        <end position="118"/>
    </location>
    <ligand>
        <name>GTP</name>
        <dbReference type="ChEBI" id="CHEBI:37565"/>
    </ligand>
</feature>
<feature type="modified residue" description="Phosphotyrosine; by SRC" evidence="3">
    <location>
        <position position="64"/>
    </location>
</feature>
<feature type="modified residue" description="Cysteine methyl ester" evidence="1">
    <location>
        <position position="188"/>
    </location>
</feature>
<feature type="lipid moiety-binding region" description="S-geranylgeranyl cysteine" evidence="1">
    <location>
        <position position="188"/>
    </location>
</feature>
<dbReference type="EC" id="3.6.5.2" evidence="2 3"/>
<dbReference type="EMBL" id="AB169828">
    <property type="protein sequence ID" value="BAE01909.1"/>
    <property type="molecule type" value="mRNA"/>
</dbReference>
<dbReference type="RefSeq" id="NP_001270330.1">
    <property type="nucleotide sequence ID" value="NM_001283401.1"/>
</dbReference>
<dbReference type="SMR" id="Q4R4R6"/>
<dbReference type="STRING" id="9541.ENSMFAP00000018965"/>
<dbReference type="eggNOG" id="KOG0393">
    <property type="taxonomic scope" value="Eukaryota"/>
</dbReference>
<dbReference type="Proteomes" id="UP000233100">
    <property type="component" value="Unplaced"/>
</dbReference>
<dbReference type="GO" id="GO:0005813">
    <property type="term" value="C:centrosome"/>
    <property type="evidence" value="ECO:0007669"/>
    <property type="project" value="UniProtKB-SubCell"/>
</dbReference>
<dbReference type="GO" id="GO:0005737">
    <property type="term" value="C:cytoplasm"/>
    <property type="evidence" value="ECO:0007669"/>
    <property type="project" value="UniProtKB-SubCell"/>
</dbReference>
<dbReference type="GO" id="GO:0031258">
    <property type="term" value="C:lamellipodium membrane"/>
    <property type="evidence" value="ECO:0007669"/>
    <property type="project" value="UniProtKB-SubCell"/>
</dbReference>
<dbReference type="GO" id="GO:0016020">
    <property type="term" value="C:membrane"/>
    <property type="evidence" value="ECO:0000250"/>
    <property type="project" value="UniProtKB"/>
</dbReference>
<dbReference type="GO" id="GO:0030496">
    <property type="term" value="C:midbody"/>
    <property type="evidence" value="ECO:0000250"/>
    <property type="project" value="UniProtKB"/>
</dbReference>
<dbReference type="GO" id="GO:0072686">
    <property type="term" value="C:mitotic spindle"/>
    <property type="evidence" value="ECO:0000250"/>
    <property type="project" value="UniProtKB"/>
</dbReference>
<dbReference type="GO" id="GO:0051233">
    <property type="term" value="C:spindle midzone"/>
    <property type="evidence" value="ECO:0000250"/>
    <property type="project" value="UniProtKB"/>
</dbReference>
<dbReference type="GO" id="GO:0003925">
    <property type="term" value="F:G protein activity"/>
    <property type="evidence" value="ECO:0007669"/>
    <property type="project" value="UniProtKB-EC"/>
</dbReference>
<dbReference type="GO" id="GO:0005525">
    <property type="term" value="F:GTP binding"/>
    <property type="evidence" value="ECO:0007669"/>
    <property type="project" value="UniProtKB-KW"/>
</dbReference>
<dbReference type="GO" id="GO:0007015">
    <property type="term" value="P:actin filament organization"/>
    <property type="evidence" value="ECO:0000250"/>
    <property type="project" value="UniProtKB"/>
</dbReference>
<dbReference type="GO" id="GO:0009653">
    <property type="term" value="P:anatomical structure morphogenesis"/>
    <property type="evidence" value="ECO:0007669"/>
    <property type="project" value="UniProtKB-ARBA"/>
</dbReference>
<dbReference type="GO" id="GO:0030154">
    <property type="term" value="P:cell differentiation"/>
    <property type="evidence" value="ECO:0007669"/>
    <property type="project" value="UniProtKB-KW"/>
</dbReference>
<dbReference type="GO" id="GO:0007399">
    <property type="term" value="P:nervous system development"/>
    <property type="evidence" value="ECO:0007669"/>
    <property type="project" value="UniProtKB-KW"/>
</dbReference>
<dbReference type="GO" id="GO:0006911">
    <property type="term" value="P:phagocytosis, engulfment"/>
    <property type="evidence" value="ECO:0000250"/>
    <property type="project" value="UniProtKB"/>
</dbReference>
<dbReference type="GO" id="GO:0032467">
    <property type="term" value="P:positive regulation of cytokinesis"/>
    <property type="evidence" value="ECO:0000250"/>
    <property type="project" value="UniProtKB"/>
</dbReference>
<dbReference type="GO" id="GO:0048549">
    <property type="term" value="P:positive regulation of pinocytosis"/>
    <property type="evidence" value="ECO:0000250"/>
    <property type="project" value="UniProtKB"/>
</dbReference>
<dbReference type="GO" id="GO:1900026">
    <property type="term" value="P:positive regulation of substrate adhesion-dependent cell spreading"/>
    <property type="evidence" value="ECO:0000250"/>
    <property type="project" value="UniProtKB"/>
</dbReference>
<dbReference type="GO" id="GO:0051988">
    <property type="term" value="P:regulation of attachment of spindle microtubules to kinetochore"/>
    <property type="evidence" value="ECO:0000250"/>
    <property type="project" value="UniProtKB"/>
</dbReference>
<dbReference type="GO" id="GO:0051489">
    <property type="term" value="P:regulation of filopodium assembly"/>
    <property type="evidence" value="ECO:0000250"/>
    <property type="project" value="UniProtKB"/>
</dbReference>
<dbReference type="GO" id="GO:0007264">
    <property type="term" value="P:small GTPase-mediated signal transduction"/>
    <property type="evidence" value="ECO:0007669"/>
    <property type="project" value="InterPro"/>
</dbReference>
<dbReference type="CDD" id="cd01874">
    <property type="entry name" value="Cdc42"/>
    <property type="match status" value="1"/>
</dbReference>
<dbReference type="FunFam" id="3.40.50.300:FF:000167">
    <property type="entry name" value="Cell division control protein 42 homolog"/>
    <property type="match status" value="1"/>
</dbReference>
<dbReference type="Gene3D" id="3.40.50.300">
    <property type="entry name" value="P-loop containing nucleotide triphosphate hydrolases"/>
    <property type="match status" value="1"/>
</dbReference>
<dbReference type="InterPro" id="IPR037874">
    <property type="entry name" value="Cdc42"/>
</dbReference>
<dbReference type="InterPro" id="IPR027417">
    <property type="entry name" value="P-loop_NTPase"/>
</dbReference>
<dbReference type="InterPro" id="IPR005225">
    <property type="entry name" value="Small_GTP-bd"/>
</dbReference>
<dbReference type="InterPro" id="IPR001806">
    <property type="entry name" value="Small_GTPase"/>
</dbReference>
<dbReference type="InterPro" id="IPR003578">
    <property type="entry name" value="Small_GTPase_Rho"/>
</dbReference>
<dbReference type="NCBIfam" id="TIGR00231">
    <property type="entry name" value="small_GTP"/>
    <property type="match status" value="1"/>
</dbReference>
<dbReference type="PANTHER" id="PTHR24072">
    <property type="entry name" value="RHO FAMILY GTPASE"/>
    <property type="match status" value="1"/>
</dbReference>
<dbReference type="Pfam" id="PF00071">
    <property type="entry name" value="Ras"/>
    <property type="match status" value="1"/>
</dbReference>
<dbReference type="PRINTS" id="PR00449">
    <property type="entry name" value="RASTRNSFRMNG"/>
</dbReference>
<dbReference type="SMART" id="SM00175">
    <property type="entry name" value="RAB"/>
    <property type="match status" value="1"/>
</dbReference>
<dbReference type="SMART" id="SM00173">
    <property type="entry name" value="RAS"/>
    <property type="match status" value="1"/>
</dbReference>
<dbReference type="SMART" id="SM00174">
    <property type="entry name" value="RHO"/>
    <property type="match status" value="1"/>
</dbReference>
<dbReference type="SUPFAM" id="SSF52540">
    <property type="entry name" value="P-loop containing nucleoside triphosphate hydrolases"/>
    <property type="match status" value="1"/>
</dbReference>
<dbReference type="PROSITE" id="PS51420">
    <property type="entry name" value="RHO"/>
    <property type="match status" value="1"/>
</dbReference>
<reference key="1">
    <citation type="submission" date="2005-06" db="EMBL/GenBank/DDBJ databases">
        <title>DNA sequences of macaque genes expressed in brain or testis and its evolutionary implications.</title>
        <authorList>
            <consortium name="International consortium for macaque cDNA sequencing and analysis"/>
        </authorList>
    </citation>
    <scope>NUCLEOTIDE SEQUENCE [LARGE SCALE MRNA]</scope>
    <source>
        <tissue>Frontal cortex</tissue>
    </source>
</reference>
<comment type="function">
    <text evidence="2 3 4">Plasma membrane-associated small GTPase which cycles between an active GTP-bound and an inactive GDP-bound state. In active state binds to a variety of effector proteins to regulate cellular responses. Involved in epithelial cell polarization processes. Regulates the bipolar attachment of spindle microtubules to kinetochores before chromosome congression in metaphase. Regulates cell migration. In neurons, plays a role in the extension and maintenance of the formation of filopodia, thin and actin-rich surface projections (By similarity). Required for DOCK10-mediated spine formation in Purkinje cells and hippocampal neurons. Facilitates filopodia formation upon DOCK11-activation (By similarity). Upon activation by CaMKII, modulates dendritic spine structural plasticity by relaying CaMKII transient activation to synapse-specific, long-term signaling (By similarity). Also plays a role in phagocytosis through organization of the F-actin cytoskeleton associated with forming phagocytic cups (By similarity). Upon activation by PLEKHG4B, involved in actin cytoskeletal remodeling during epithelial cell-cell junction formation (By similarity).</text>
</comment>
<comment type="catalytic activity">
    <reaction evidence="2 3">
        <text>GTP + H2O = GDP + phosphate + H(+)</text>
        <dbReference type="Rhea" id="RHEA:19669"/>
        <dbReference type="ChEBI" id="CHEBI:15377"/>
        <dbReference type="ChEBI" id="CHEBI:15378"/>
        <dbReference type="ChEBI" id="CHEBI:37565"/>
        <dbReference type="ChEBI" id="CHEBI:43474"/>
        <dbReference type="ChEBI" id="CHEBI:58189"/>
        <dbReference type="EC" id="3.6.5.2"/>
    </reaction>
    <physiologicalReaction direction="left-to-right" evidence="2 3">
        <dbReference type="Rhea" id="RHEA:19670"/>
    </physiologicalReaction>
</comment>
<comment type="activity regulation">
    <text evidence="2 3">Regulated by guanine nucleotide exchange factors (GEFs) which promote the exchange of bound GDP for free GTP, GTPase activating proteins (GAPs) which increase the GTP hydrolysis activity, and GDP dissociation inhibitors which inhibit the dissociation of the nucleotide from the GTPase.</text>
</comment>
<comment type="subunit">
    <text evidence="2 3">Interacts with CDC42EP1, CDC42EP2, CDC42EP3, CDC42EP4, CDC42EP5, CDC42SE1, CDC42SE2, PARD6A, PARD6B and PARD6G (in a GTP-dependent manner). Interacts with activated CSPG4 and with BAIAP2. Interacts with DOCK11/Zizimin2; the interaction activates CDC42 by exchanging GDP for GTP. Interacts with DOCK9; the interaction activates CDC42 by exchanging GDP for GTP. Interacts with DOCK8 (via DHR-2 domain); the interaction activates CDC42 by exchanging GDP for GTP. Interacts with IQGAP1. Interacts with NET1 and ARHGAP33/TCGAP. Part of a complex with PARD3, PARD6A or PARD6B and PRKCI or PRKCZ. The GTP-bound form interacts with CCPG1. Interacts with USP6. Interacts with NEK6. Part of a collagen stimulated complex involved in cell migration composed of CDC42, CRK, TNK2 and BCAR1/p130cas. Interacts with ITGB1BP1. Interacts with ARHGDIA; this interaction inactivates and stabilizes CDC42. Interacts with ARHGDIB; this maintains CDC42 in the inactive, GDP-bound form. Interacts in (GTP-bound form) with FNBP1L and ABI1, but only in the presence of FNBP1L. Interacts with MARCKS (By similarity). Interacts with CD151 and ITGB1 (By similarity).</text>
</comment>
<comment type="subcellular location">
    <subcellularLocation>
        <location evidence="2">Cell membrane</location>
        <topology evidence="2">Lipid-anchor</topology>
        <orientation evidence="2">Cytoplasmic side</orientation>
    </subcellularLocation>
    <subcellularLocation>
        <location evidence="3">Midbody</location>
    </subcellularLocation>
    <subcellularLocation>
        <location evidence="3">Cytoplasm</location>
        <location evidence="3">Cytoskeleton</location>
        <location evidence="3">Microtubule organizing center</location>
        <location evidence="3">Centrosome</location>
    </subcellularLocation>
    <subcellularLocation>
        <location evidence="3">Cytoplasm</location>
        <location evidence="3">Cytoskeleton</location>
        <location evidence="3">Spindle</location>
    </subcellularLocation>
    <subcellularLocation>
        <location evidence="2">Cytoplasm</location>
    </subcellularLocation>
    <subcellularLocation>
        <location evidence="2">Cell projection</location>
        <location evidence="2">Lamellipodium membrane</location>
        <topology evidence="2">Peripheral membrane protein</topology>
        <orientation evidence="2">Cytoplasmic side</orientation>
    </subcellularLocation>
    <text evidence="2 3">Localizes to spindle during prometaphase cells. Moves to the central spindle as cells progressed through anaphase to telophase. Localizes at the end of cytokinesis in the intercellular bridge formed between two daughter cells. Its localization is regulated by the activities of guanine nucleotide exchange factor ECT2 and GTPase activating protein RACGAP1. Colocalizes with NEK6 in the centrosome. In its active GTP-bound form localizes to the leading edge membrane of migrating dendritic cells.</text>
</comment>
<comment type="PTM">
    <text evidence="1">Phosphorylated by SRC in an EGF-dependent manner, this stimulates the binding of the Rho-GDP dissociation inhibitor RhoGDI.</text>
</comment>
<comment type="similarity">
    <text evidence="6">Belongs to the small GTPase superfamily. Rho family. CDC42 subfamily.</text>
</comment>
<evidence type="ECO:0000250" key="1"/>
<evidence type="ECO:0000250" key="2">
    <source>
        <dbReference type="UniProtKB" id="P60766"/>
    </source>
</evidence>
<evidence type="ECO:0000250" key="3">
    <source>
        <dbReference type="UniProtKB" id="P60953"/>
    </source>
</evidence>
<evidence type="ECO:0000250" key="4">
    <source>
        <dbReference type="UniProtKB" id="Q8CFN2"/>
    </source>
</evidence>
<evidence type="ECO:0000255" key="5"/>
<evidence type="ECO:0000305" key="6"/>
<accession>Q4R4R6</accession>
<organism>
    <name type="scientific">Macaca fascicularis</name>
    <name type="common">Crab-eating macaque</name>
    <name type="synonym">Cynomolgus monkey</name>
    <dbReference type="NCBI Taxonomy" id="9541"/>
    <lineage>
        <taxon>Eukaryota</taxon>
        <taxon>Metazoa</taxon>
        <taxon>Chordata</taxon>
        <taxon>Craniata</taxon>
        <taxon>Vertebrata</taxon>
        <taxon>Euteleostomi</taxon>
        <taxon>Mammalia</taxon>
        <taxon>Eutheria</taxon>
        <taxon>Euarchontoglires</taxon>
        <taxon>Primates</taxon>
        <taxon>Haplorrhini</taxon>
        <taxon>Catarrhini</taxon>
        <taxon>Cercopithecidae</taxon>
        <taxon>Cercopithecinae</taxon>
        <taxon>Macaca</taxon>
    </lineage>
</organism>
<protein>
    <recommendedName>
        <fullName>Cell division control protein 42 homolog</fullName>
        <ecNumber evidence="2 3">3.6.5.2</ecNumber>
    </recommendedName>
</protein>
<proteinExistence type="evidence at transcript level"/>
<name>CDC42_MACFA</name>
<keyword id="KW-1003">Cell membrane</keyword>
<keyword id="KW-0966">Cell projection</keyword>
<keyword id="KW-0963">Cytoplasm</keyword>
<keyword id="KW-0206">Cytoskeleton</keyword>
<keyword id="KW-0221">Differentiation</keyword>
<keyword id="KW-0342">GTP-binding</keyword>
<keyword id="KW-0378">Hydrolase</keyword>
<keyword id="KW-0449">Lipoprotein</keyword>
<keyword id="KW-0472">Membrane</keyword>
<keyword id="KW-0488">Methylation</keyword>
<keyword id="KW-0524">Neurogenesis</keyword>
<keyword id="KW-0547">Nucleotide-binding</keyword>
<keyword id="KW-0597">Phosphoprotein</keyword>
<keyword id="KW-0636">Prenylation</keyword>
<keyword id="KW-1185">Reference proteome</keyword>